<sequence>MSGNSRATRLGDRIKEIVATMLERRIKDPRLGFVTVTDVELTGDLQHATVFYTVLGDAEELASSTAALESAKGLLRSEVGKQTGVKHTPTLTFQLDATPQNAAHVEEALREAAARDAEVAALAATATYAGEADPYRRPAVDDAGDSADDADPAEDERPS</sequence>
<reference key="1">
    <citation type="journal article" date="2009" name="Stand. Genomic Sci.">
        <title>Complete genome sequence of Beutenbergia cavernae type strain (HKI 0122).</title>
        <authorList>
            <person name="Land M."/>
            <person name="Pukall R."/>
            <person name="Abt B."/>
            <person name="Goker M."/>
            <person name="Rohde M."/>
            <person name="Glavina Del Rio T."/>
            <person name="Tice H."/>
            <person name="Copeland A."/>
            <person name="Cheng J.F."/>
            <person name="Lucas S."/>
            <person name="Chen F."/>
            <person name="Nolan M."/>
            <person name="Bruce D."/>
            <person name="Goodwin L."/>
            <person name="Pitluck S."/>
            <person name="Ivanova N."/>
            <person name="Mavromatis K."/>
            <person name="Ovchinnikova G."/>
            <person name="Pati A."/>
            <person name="Chen A."/>
            <person name="Palaniappan K."/>
            <person name="Hauser L."/>
            <person name="Chang Y.J."/>
            <person name="Jefferies C.C."/>
            <person name="Saunders E."/>
            <person name="Brettin T."/>
            <person name="Detter J.C."/>
            <person name="Han C."/>
            <person name="Chain P."/>
            <person name="Bristow J."/>
            <person name="Eisen J.A."/>
            <person name="Markowitz V."/>
            <person name="Hugenholtz P."/>
            <person name="Kyrpides N.C."/>
            <person name="Klenk H.P."/>
            <person name="Lapidus A."/>
        </authorList>
    </citation>
    <scope>NUCLEOTIDE SEQUENCE [LARGE SCALE GENOMIC DNA]</scope>
    <source>
        <strain>ATCC BAA-8 / DSM 12333 / CCUG 43141 / JCM 11478 / NBRC 16432 / NCIMB 13614 / HKI 0122</strain>
    </source>
</reference>
<feature type="chain" id="PRO_1000201624" description="Ribosome-binding factor A">
    <location>
        <begin position="1"/>
        <end position="159"/>
    </location>
</feature>
<feature type="region of interest" description="Disordered" evidence="2">
    <location>
        <begin position="127"/>
        <end position="159"/>
    </location>
</feature>
<feature type="compositionally biased region" description="Acidic residues" evidence="2">
    <location>
        <begin position="142"/>
        <end position="159"/>
    </location>
</feature>
<gene>
    <name evidence="1" type="primary">rbfA</name>
    <name type="ordered locus">Bcav_2488</name>
</gene>
<evidence type="ECO:0000255" key="1">
    <source>
        <dbReference type="HAMAP-Rule" id="MF_00003"/>
    </source>
</evidence>
<evidence type="ECO:0000256" key="2">
    <source>
        <dbReference type="SAM" id="MobiDB-lite"/>
    </source>
</evidence>
<dbReference type="EMBL" id="CP001618">
    <property type="protein sequence ID" value="ACQ80738.1"/>
    <property type="molecule type" value="Genomic_DNA"/>
</dbReference>
<dbReference type="RefSeq" id="WP_015882978.1">
    <property type="nucleotide sequence ID" value="NC_012669.1"/>
</dbReference>
<dbReference type="SMR" id="C5BWS2"/>
<dbReference type="STRING" id="471853.Bcav_2488"/>
<dbReference type="KEGG" id="bcv:Bcav_2488"/>
<dbReference type="eggNOG" id="COG0858">
    <property type="taxonomic scope" value="Bacteria"/>
</dbReference>
<dbReference type="HOGENOM" id="CLU_089475_0_0_11"/>
<dbReference type="OrthoDB" id="307788at2"/>
<dbReference type="Proteomes" id="UP000007962">
    <property type="component" value="Chromosome"/>
</dbReference>
<dbReference type="GO" id="GO:0005829">
    <property type="term" value="C:cytosol"/>
    <property type="evidence" value="ECO:0007669"/>
    <property type="project" value="TreeGrafter"/>
</dbReference>
<dbReference type="GO" id="GO:0043024">
    <property type="term" value="F:ribosomal small subunit binding"/>
    <property type="evidence" value="ECO:0007669"/>
    <property type="project" value="TreeGrafter"/>
</dbReference>
<dbReference type="GO" id="GO:0030490">
    <property type="term" value="P:maturation of SSU-rRNA"/>
    <property type="evidence" value="ECO:0007669"/>
    <property type="project" value="UniProtKB-UniRule"/>
</dbReference>
<dbReference type="Gene3D" id="3.30.300.20">
    <property type="match status" value="1"/>
</dbReference>
<dbReference type="HAMAP" id="MF_00003">
    <property type="entry name" value="RbfA"/>
    <property type="match status" value="1"/>
</dbReference>
<dbReference type="InterPro" id="IPR015946">
    <property type="entry name" value="KH_dom-like_a/b"/>
</dbReference>
<dbReference type="InterPro" id="IPR000238">
    <property type="entry name" value="RbfA"/>
</dbReference>
<dbReference type="InterPro" id="IPR023799">
    <property type="entry name" value="RbfA_dom_sf"/>
</dbReference>
<dbReference type="InterPro" id="IPR020053">
    <property type="entry name" value="Ribosome-bd_factorA_CS"/>
</dbReference>
<dbReference type="NCBIfam" id="TIGR00082">
    <property type="entry name" value="rbfA"/>
    <property type="match status" value="1"/>
</dbReference>
<dbReference type="PANTHER" id="PTHR33515">
    <property type="entry name" value="RIBOSOME-BINDING FACTOR A, CHLOROPLASTIC-RELATED"/>
    <property type="match status" value="1"/>
</dbReference>
<dbReference type="PANTHER" id="PTHR33515:SF1">
    <property type="entry name" value="RIBOSOME-BINDING FACTOR A, CHLOROPLASTIC-RELATED"/>
    <property type="match status" value="1"/>
</dbReference>
<dbReference type="Pfam" id="PF02033">
    <property type="entry name" value="RBFA"/>
    <property type="match status" value="1"/>
</dbReference>
<dbReference type="SUPFAM" id="SSF89919">
    <property type="entry name" value="Ribosome-binding factor A, RbfA"/>
    <property type="match status" value="1"/>
</dbReference>
<dbReference type="PROSITE" id="PS01319">
    <property type="entry name" value="RBFA"/>
    <property type="match status" value="1"/>
</dbReference>
<accession>C5BWS2</accession>
<keyword id="KW-0963">Cytoplasm</keyword>
<keyword id="KW-1185">Reference proteome</keyword>
<keyword id="KW-0690">Ribosome biogenesis</keyword>
<organism>
    <name type="scientific">Beutenbergia cavernae (strain ATCC BAA-8 / DSM 12333 / CCUG 43141 / JCM 11478 / NBRC 16432 / NCIMB 13614 / HKI 0122)</name>
    <dbReference type="NCBI Taxonomy" id="471853"/>
    <lineage>
        <taxon>Bacteria</taxon>
        <taxon>Bacillati</taxon>
        <taxon>Actinomycetota</taxon>
        <taxon>Actinomycetes</taxon>
        <taxon>Micrococcales</taxon>
        <taxon>Beutenbergiaceae</taxon>
        <taxon>Beutenbergia</taxon>
    </lineage>
</organism>
<comment type="function">
    <text evidence="1">One of several proteins that assist in the late maturation steps of the functional core of the 30S ribosomal subunit. Associates with free 30S ribosomal subunits (but not with 30S subunits that are part of 70S ribosomes or polysomes). Required for efficient processing of 16S rRNA. May interact with the 5'-terminal helix region of 16S rRNA.</text>
</comment>
<comment type="subunit">
    <text evidence="1">Monomer. Binds 30S ribosomal subunits, but not 50S ribosomal subunits or 70S ribosomes.</text>
</comment>
<comment type="subcellular location">
    <subcellularLocation>
        <location evidence="1">Cytoplasm</location>
    </subcellularLocation>
</comment>
<comment type="similarity">
    <text evidence="1">Belongs to the RbfA family.</text>
</comment>
<protein>
    <recommendedName>
        <fullName evidence="1">Ribosome-binding factor A</fullName>
    </recommendedName>
</protein>
<proteinExistence type="inferred from homology"/>
<name>RBFA_BEUC1</name>